<organism>
    <name type="scientific">Macaca mulatta</name>
    <name type="common">Rhesus macaque</name>
    <dbReference type="NCBI Taxonomy" id="9544"/>
    <lineage>
        <taxon>Eukaryota</taxon>
        <taxon>Metazoa</taxon>
        <taxon>Chordata</taxon>
        <taxon>Craniata</taxon>
        <taxon>Vertebrata</taxon>
        <taxon>Euteleostomi</taxon>
        <taxon>Mammalia</taxon>
        <taxon>Eutheria</taxon>
        <taxon>Euarchontoglires</taxon>
        <taxon>Primates</taxon>
        <taxon>Haplorrhini</taxon>
        <taxon>Catarrhini</taxon>
        <taxon>Cercopithecidae</taxon>
        <taxon>Cercopithecinae</taxon>
        <taxon>Macaca</taxon>
    </lineage>
</organism>
<keyword id="KW-0297">G-protein coupled receptor</keyword>
<keyword id="KW-0325">Glycoprotein</keyword>
<keyword id="KW-0472">Membrane</keyword>
<keyword id="KW-0675">Receptor</keyword>
<keyword id="KW-1185">Reference proteome</keyword>
<keyword id="KW-0716">Sensory transduction</keyword>
<keyword id="KW-0919">Taste</keyword>
<keyword id="KW-0807">Transducer</keyword>
<keyword id="KW-0812">Transmembrane</keyword>
<keyword id="KW-1133">Transmembrane helix</keyword>
<evidence type="ECO:0000250" key="1"/>
<evidence type="ECO:0000255" key="2"/>
<evidence type="ECO:0000305" key="3"/>
<protein>
    <recommendedName>
        <fullName>Taste receptor type 2 member 7</fullName>
        <shortName>T2R7</shortName>
    </recommendedName>
</protein>
<dbReference type="EMBL" id="AY725000">
    <property type="protein sequence ID" value="AAU21182.1"/>
    <property type="molecule type" value="Genomic_DNA"/>
</dbReference>
<dbReference type="RefSeq" id="NP_001074235.1">
    <property type="nucleotide sequence ID" value="NM_001080766.1"/>
</dbReference>
<dbReference type="SMR" id="Q645T7"/>
<dbReference type="FunCoup" id="Q645T7">
    <property type="interactions" value="222"/>
</dbReference>
<dbReference type="STRING" id="9544.ENSMMUP00000069774"/>
<dbReference type="GlyCosmos" id="Q645T7">
    <property type="glycosylation" value="1 site, No reported glycans"/>
</dbReference>
<dbReference type="PaxDb" id="9544-ENSMMUP00000001986"/>
<dbReference type="Ensembl" id="ENSMMUT00000080497.1">
    <property type="protein sequence ID" value="ENSMMUP00000069774.1"/>
    <property type="gene ID" value="ENSMMUG00000055103.1"/>
</dbReference>
<dbReference type="GeneID" id="717909"/>
<dbReference type="KEGG" id="mcc:717909"/>
<dbReference type="CTD" id="50837"/>
<dbReference type="VEuPathDB" id="HostDB:ENSMMUG00000055103"/>
<dbReference type="eggNOG" id="ENOG502SKRK">
    <property type="taxonomic scope" value="Eukaryota"/>
</dbReference>
<dbReference type="GeneTree" id="ENSGT01100000263477"/>
<dbReference type="HOGENOM" id="CLU_072337_3_0_1"/>
<dbReference type="InParanoid" id="Q645T7"/>
<dbReference type="OMA" id="WRIDRVI"/>
<dbReference type="OrthoDB" id="8876749at2759"/>
<dbReference type="TreeFam" id="TF335891"/>
<dbReference type="Proteomes" id="UP000006718">
    <property type="component" value="Chromosome 11"/>
</dbReference>
<dbReference type="ExpressionAtlas" id="Q645T7">
    <property type="expression patterns" value="baseline"/>
</dbReference>
<dbReference type="GO" id="GO:0016020">
    <property type="term" value="C:membrane"/>
    <property type="evidence" value="ECO:0000318"/>
    <property type="project" value="GO_Central"/>
</dbReference>
<dbReference type="GO" id="GO:0005886">
    <property type="term" value="C:plasma membrane"/>
    <property type="evidence" value="ECO:0007669"/>
    <property type="project" value="UniProtKB-ARBA"/>
</dbReference>
<dbReference type="GO" id="GO:0033038">
    <property type="term" value="F:bitter taste receptor activity"/>
    <property type="evidence" value="ECO:0000318"/>
    <property type="project" value="GO_Central"/>
</dbReference>
<dbReference type="GO" id="GO:0004930">
    <property type="term" value="F:G protein-coupled receptor activity"/>
    <property type="evidence" value="ECO:0007669"/>
    <property type="project" value="UniProtKB-KW"/>
</dbReference>
<dbReference type="GO" id="GO:0001580">
    <property type="term" value="P:detection of chemical stimulus involved in sensory perception of bitter taste"/>
    <property type="evidence" value="ECO:0000318"/>
    <property type="project" value="GO_Central"/>
</dbReference>
<dbReference type="CDD" id="cd15023">
    <property type="entry name" value="7tm_TAS2R7-like"/>
    <property type="match status" value="1"/>
</dbReference>
<dbReference type="FunFam" id="1.20.1070.10:FF:000042">
    <property type="entry name" value="Taste receptor type 2 member 7"/>
    <property type="match status" value="1"/>
</dbReference>
<dbReference type="Gene3D" id="1.20.1070.10">
    <property type="entry name" value="Rhodopsin 7-helix transmembrane proteins"/>
    <property type="match status" value="1"/>
</dbReference>
<dbReference type="InterPro" id="IPR017452">
    <property type="entry name" value="GPCR_Rhodpsn_7TM"/>
</dbReference>
<dbReference type="InterPro" id="IPR007960">
    <property type="entry name" value="TAS2R"/>
</dbReference>
<dbReference type="PANTHER" id="PTHR11394">
    <property type="entry name" value="TASTE RECEPTOR TYPE 2"/>
    <property type="match status" value="1"/>
</dbReference>
<dbReference type="PANTHER" id="PTHR11394:SF58">
    <property type="entry name" value="TASTE RECEPTOR TYPE 2 MEMBER 7"/>
    <property type="match status" value="1"/>
</dbReference>
<dbReference type="Pfam" id="PF05296">
    <property type="entry name" value="TAS2R"/>
    <property type="match status" value="1"/>
</dbReference>
<dbReference type="SUPFAM" id="SSF81321">
    <property type="entry name" value="Family A G protein-coupled receptor-like"/>
    <property type="match status" value="1"/>
</dbReference>
<dbReference type="PROSITE" id="PS50262">
    <property type="entry name" value="G_PROTEIN_RECEP_F1_2"/>
    <property type="match status" value="1"/>
</dbReference>
<name>TA2R7_MACMU</name>
<gene>
    <name type="primary">TAS2R7</name>
</gene>
<accession>Q645T7</accession>
<reference key="1">
    <citation type="journal article" date="2005" name="Mol. Biol. Evol.">
        <title>Evolution of bitter taste receptors in humans and apes.</title>
        <authorList>
            <person name="Fischer A."/>
            <person name="Gilad Y."/>
            <person name="Man O."/>
            <person name="Paeaebo S."/>
        </authorList>
    </citation>
    <scope>NUCLEOTIDE SEQUENCE [GENOMIC DNA]</scope>
</reference>
<feature type="chain" id="PRO_0000082221" description="Taste receptor type 2 member 7">
    <location>
        <begin position="1"/>
        <end position="318"/>
    </location>
</feature>
<feature type="topological domain" description="Extracellular" evidence="2">
    <location>
        <begin position="1"/>
        <end position="9"/>
    </location>
</feature>
<feature type="transmembrane region" description="Helical; Name=1" evidence="2">
    <location>
        <begin position="10"/>
        <end position="30"/>
    </location>
</feature>
<feature type="topological domain" description="Cytoplasmic" evidence="2">
    <location>
        <begin position="31"/>
        <end position="55"/>
    </location>
</feature>
<feature type="transmembrane region" description="Helical; Name=2" evidence="2">
    <location>
        <begin position="56"/>
        <end position="76"/>
    </location>
</feature>
<feature type="topological domain" description="Extracellular" evidence="2">
    <location>
        <begin position="77"/>
        <end position="94"/>
    </location>
</feature>
<feature type="transmembrane region" description="Helical; Name=3" evidence="2">
    <location>
        <begin position="95"/>
        <end position="115"/>
    </location>
</feature>
<feature type="topological domain" description="Cytoplasmic" evidence="2">
    <location>
        <begin position="116"/>
        <end position="128"/>
    </location>
</feature>
<feature type="transmembrane region" description="Helical; Name=4" evidence="2">
    <location>
        <begin position="129"/>
        <end position="149"/>
    </location>
</feature>
<feature type="topological domain" description="Extracellular" evidence="2">
    <location>
        <begin position="150"/>
        <end position="187"/>
    </location>
</feature>
<feature type="transmembrane region" description="Helical; Name=5" evidence="2">
    <location>
        <begin position="188"/>
        <end position="208"/>
    </location>
</feature>
<feature type="topological domain" description="Cytoplasmic" evidence="2">
    <location>
        <begin position="209"/>
        <end position="235"/>
    </location>
</feature>
<feature type="transmembrane region" description="Helical; Name=6" evidence="2">
    <location>
        <begin position="236"/>
        <end position="256"/>
    </location>
</feature>
<feature type="topological domain" description="Extracellular" evidence="2">
    <location>
        <begin position="257"/>
        <end position="266"/>
    </location>
</feature>
<feature type="transmembrane region" description="Helical; Name=7" evidence="2">
    <location>
        <begin position="267"/>
        <end position="287"/>
    </location>
</feature>
<feature type="topological domain" description="Cytoplasmic" evidence="2">
    <location>
        <begin position="288"/>
        <end position="318"/>
    </location>
</feature>
<feature type="glycosylation site" description="N-linked (GlcNAc...) asparagine" evidence="2">
    <location>
        <position position="167"/>
    </location>
</feature>
<proteinExistence type="inferred from homology"/>
<comment type="function">
    <text evidence="1">Gustducin-coupled receptor implicated in the perception of bitter compounds in the oral cavity and the gastrointestinal tract. Signals through PLCB2 and the calcium-regulated cation channel TRPM5 (By similarity).</text>
</comment>
<comment type="subcellular location">
    <subcellularLocation>
        <location>Membrane</location>
        <topology>Multi-pass membrane protein</topology>
    </subcellularLocation>
</comment>
<comment type="miscellaneous">
    <text>Several bitter taste receptors are expressed in a single taste receptor cell.</text>
</comment>
<comment type="similarity">
    <text evidence="3">Belongs to the G-protein coupled receptor T2R family.</text>
</comment>
<sequence>MTDKVQTTLLFLAIGEFSVGILGNAFIGLVNCMDWVKKRKIASIDLILTSLAISRICLLCVILLDCFMLVLYPDVYATGKQMRIIDFFWTLTNHLSIWFATCLSIYYFFKIANFFHPLFLWMKWRIDRVISWILLGCMVLSVFINLPATENLNADFRRCVKAKRKTNLTWSCRVTKAQHASTKLFLNLVTLLPFSVCLMSFFLLILSLWRHIRRMQLSATGCRDPSTEAHVRALKAVISFLLLFIAYYLSFLIATSSYFIPETELAVIFGEFIALIYPSSHSFILILGNSKLRRASLKVLWTVMSILKGRKFQQHKQI</sequence>